<comment type="function">
    <text evidence="1">Catalyzes the formation of 6,7-dimethyl-8-ribityllumazine by condensation of 5-amino-6-(D-ribitylamino)uracil with 3,4-dihydroxy-2-butanone 4-phosphate. This is the penultimate step in the biosynthesis of riboflavin.</text>
</comment>
<comment type="catalytic activity">
    <reaction evidence="1">
        <text>(2S)-2-hydroxy-3-oxobutyl phosphate + 5-amino-6-(D-ribitylamino)uracil = 6,7-dimethyl-8-(1-D-ribityl)lumazine + phosphate + 2 H2O + H(+)</text>
        <dbReference type="Rhea" id="RHEA:26152"/>
        <dbReference type="ChEBI" id="CHEBI:15377"/>
        <dbReference type="ChEBI" id="CHEBI:15378"/>
        <dbReference type="ChEBI" id="CHEBI:15934"/>
        <dbReference type="ChEBI" id="CHEBI:43474"/>
        <dbReference type="ChEBI" id="CHEBI:58201"/>
        <dbReference type="ChEBI" id="CHEBI:58830"/>
        <dbReference type="EC" id="2.5.1.78"/>
    </reaction>
</comment>
<comment type="pathway">
    <text evidence="1">Cofactor biosynthesis; riboflavin biosynthesis; riboflavin from 2-hydroxy-3-oxobutyl phosphate and 5-amino-6-(D-ribitylamino)uracil: step 1/2.</text>
</comment>
<comment type="subunit">
    <text evidence="1">Forms an icosahedral capsid composed of 60 subunits, arranged as a dodecamer of pentamers.</text>
</comment>
<comment type="similarity">
    <text evidence="1">Belongs to the DMRL synthase family.</text>
</comment>
<evidence type="ECO:0000255" key="1">
    <source>
        <dbReference type="HAMAP-Rule" id="MF_00178"/>
    </source>
</evidence>
<organism>
    <name type="scientific">Stenotrophomonas maltophilia (strain R551-3)</name>
    <dbReference type="NCBI Taxonomy" id="391008"/>
    <lineage>
        <taxon>Bacteria</taxon>
        <taxon>Pseudomonadati</taxon>
        <taxon>Pseudomonadota</taxon>
        <taxon>Gammaproteobacteria</taxon>
        <taxon>Lysobacterales</taxon>
        <taxon>Lysobacteraceae</taxon>
        <taxon>Stenotrophomonas</taxon>
        <taxon>Stenotrophomonas maltophilia group</taxon>
    </lineage>
</organism>
<accession>B4SJC0</accession>
<gene>
    <name evidence="1" type="primary">ribH</name>
    <name type="ordered locus">Smal_0583</name>
</gene>
<dbReference type="EC" id="2.5.1.78" evidence="1"/>
<dbReference type="EMBL" id="CP001111">
    <property type="protein sequence ID" value="ACF50288.1"/>
    <property type="molecule type" value="Genomic_DNA"/>
</dbReference>
<dbReference type="RefSeq" id="WP_004143439.1">
    <property type="nucleotide sequence ID" value="NC_011071.1"/>
</dbReference>
<dbReference type="SMR" id="B4SJC0"/>
<dbReference type="STRING" id="391008.Smal_0583"/>
<dbReference type="KEGG" id="smt:Smal_0583"/>
<dbReference type="eggNOG" id="COG0054">
    <property type="taxonomic scope" value="Bacteria"/>
</dbReference>
<dbReference type="HOGENOM" id="CLU_089358_1_2_6"/>
<dbReference type="OrthoDB" id="9809709at2"/>
<dbReference type="UniPathway" id="UPA00275">
    <property type="reaction ID" value="UER00404"/>
</dbReference>
<dbReference type="Proteomes" id="UP000001867">
    <property type="component" value="Chromosome"/>
</dbReference>
<dbReference type="GO" id="GO:0005829">
    <property type="term" value="C:cytosol"/>
    <property type="evidence" value="ECO:0007669"/>
    <property type="project" value="TreeGrafter"/>
</dbReference>
<dbReference type="GO" id="GO:0009349">
    <property type="term" value="C:riboflavin synthase complex"/>
    <property type="evidence" value="ECO:0007669"/>
    <property type="project" value="InterPro"/>
</dbReference>
<dbReference type="GO" id="GO:0000906">
    <property type="term" value="F:6,7-dimethyl-8-ribityllumazine synthase activity"/>
    <property type="evidence" value="ECO:0007669"/>
    <property type="project" value="UniProtKB-UniRule"/>
</dbReference>
<dbReference type="GO" id="GO:0009231">
    <property type="term" value="P:riboflavin biosynthetic process"/>
    <property type="evidence" value="ECO:0007669"/>
    <property type="project" value="UniProtKB-UniRule"/>
</dbReference>
<dbReference type="CDD" id="cd09209">
    <property type="entry name" value="Lumazine_synthase-I"/>
    <property type="match status" value="1"/>
</dbReference>
<dbReference type="Gene3D" id="3.40.50.960">
    <property type="entry name" value="Lumazine/riboflavin synthase"/>
    <property type="match status" value="1"/>
</dbReference>
<dbReference type="HAMAP" id="MF_00178">
    <property type="entry name" value="Lumazine_synth"/>
    <property type="match status" value="1"/>
</dbReference>
<dbReference type="InterPro" id="IPR034964">
    <property type="entry name" value="LS"/>
</dbReference>
<dbReference type="InterPro" id="IPR002180">
    <property type="entry name" value="LS/RS"/>
</dbReference>
<dbReference type="InterPro" id="IPR036467">
    <property type="entry name" value="LS/RS_sf"/>
</dbReference>
<dbReference type="NCBIfam" id="TIGR00114">
    <property type="entry name" value="lumazine-synth"/>
    <property type="match status" value="1"/>
</dbReference>
<dbReference type="PANTHER" id="PTHR21058:SF0">
    <property type="entry name" value="6,7-DIMETHYL-8-RIBITYLLUMAZINE SYNTHASE"/>
    <property type="match status" value="1"/>
</dbReference>
<dbReference type="PANTHER" id="PTHR21058">
    <property type="entry name" value="6,7-DIMETHYL-8-RIBITYLLUMAZINE SYNTHASE DMRL SYNTHASE LUMAZINE SYNTHASE"/>
    <property type="match status" value="1"/>
</dbReference>
<dbReference type="Pfam" id="PF00885">
    <property type="entry name" value="DMRL_synthase"/>
    <property type="match status" value="1"/>
</dbReference>
<dbReference type="SUPFAM" id="SSF52121">
    <property type="entry name" value="Lumazine synthase"/>
    <property type="match status" value="1"/>
</dbReference>
<feature type="chain" id="PRO_1000098234" description="6,7-dimethyl-8-ribityllumazine synthase">
    <location>
        <begin position="1"/>
        <end position="155"/>
    </location>
</feature>
<feature type="active site" description="Proton donor" evidence="1">
    <location>
        <position position="89"/>
    </location>
</feature>
<feature type="binding site" evidence="1">
    <location>
        <position position="23"/>
    </location>
    <ligand>
        <name>5-amino-6-(D-ribitylamino)uracil</name>
        <dbReference type="ChEBI" id="CHEBI:15934"/>
    </ligand>
</feature>
<feature type="binding site" evidence="1">
    <location>
        <begin position="57"/>
        <end position="59"/>
    </location>
    <ligand>
        <name>5-amino-6-(D-ribitylamino)uracil</name>
        <dbReference type="ChEBI" id="CHEBI:15934"/>
    </ligand>
</feature>
<feature type="binding site" evidence="1">
    <location>
        <begin position="81"/>
        <end position="83"/>
    </location>
    <ligand>
        <name>5-amino-6-(D-ribitylamino)uracil</name>
        <dbReference type="ChEBI" id="CHEBI:15934"/>
    </ligand>
</feature>
<feature type="binding site" evidence="1">
    <location>
        <begin position="86"/>
        <end position="87"/>
    </location>
    <ligand>
        <name>(2S)-2-hydroxy-3-oxobutyl phosphate</name>
        <dbReference type="ChEBI" id="CHEBI:58830"/>
    </ligand>
</feature>
<feature type="binding site" evidence="1">
    <location>
        <position position="114"/>
    </location>
    <ligand>
        <name>5-amino-6-(D-ribitylamino)uracil</name>
        <dbReference type="ChEBI" id="CHEBI:15934"/>
    </ligand>
</feature>
<feature type="binding site" evidence="1">
    <location>
        <position position="128"/>
    </location>
    <ligand>
        <name>(2S)-2-hydroxy-3-oxobutyl phosphate</name>
        <dbReference type="ChEBI" id="CHEBI:58830"/>
    </ligand>
</feature>
<protein>
    <recommendedName>
        <fullName evidence="1">6,7-dimethyl-8-ribityllumazine synthase</fullName>
        <shortName evidence="1">DMRL synthase</shortName>
        <shortName evidence="1">LS</shortName>
        <shortName evidence="1">Lumazine synthase</shortName>
        <ecNumber evidence="1">2.5.1.78</ecNumber>
    </recommendedName>
</protein>
<sequence length="155" mass="16537">MSHYEGDLRTPESARFAILASRWNARITDTLVAGARQSLAGNGIAEANIDVIRVPGAWELPLVAARLAAAHEHAAILTLGCVIRGDTRHYEHVADRCAEGLMRVQLDFGVPVLNGVLAVERAEDAEARAGGSHGNKGEEVALAALEMVNLLEQLP</sequence>
<proteinExistence type="inferred from homology"/>
<reference key="1">
    <citation type="submission" date="2008-06" db="EMBL/GenBank/DDBJ databases">
        <title>Complete sequence of Stenotrophomonas maltophilia R551-3.</title>
        <authorList>
            <consortium name="US DOE Joint Genome Institute"/>
            <person name="Lucas S."/>
            <person name="Copeland A."/>
            <person name="Lapidus A."/>
            <person name="Glavina del Rio T."/>
            <person name="Dalin E."/>
            <person name="Tice H."/>
            <person name="Pitluck S."/>
            <person name="Chain P."/>
            <person name="Malfatti S."/>
            <person name="Shin M."/>
            <person name="Vergez L."/>
            <person name="Lang D."/>
            <person name="Schmutz J."/>
            <person name="Larimer F."/>
            <person name="Land M."/>
            <person name="Hauser L."/>
            <person name="Kyrpides N."/>
            <person name="Mikhailova N."/>
            <person name="Taghavi S."/>
            <person name="Monchy S."/>
            <person name="Newman L."/>
            <person name="Vangronsveld J."/>
            <person name="van der Lelie D."/>
            <person name="Richardson P."/>
        </authorList>
    </citation>
    <scope>NUCLEOTIDE SEQUENCE [LARGE SCALE GENOMIC DNA]</scope>
    <source>
        <strain>R551-3</strain>
    </source>
</reference>
<keyword id="KW-0686">Riboflavin biosynthesis</keyword>
<keyword id="KW-0808">Transferase</keyword>
<name>RISB_STRM5</name>